<feature type="chain" id="PRO_1000023777" description="Transcription antitermination protein NusB">
    <location>
        <begin position="1"/>
        <end position="160"/>
    </location>
</feature>
<proteinExistence type="inferred from homology"/>
<evidence type="ECO:0000255" key="1">
    <source>
        <dbReference type="HAMAP-Rule" id="MF_00073"/>
    </source>
</evidence>
<name>NUSB_SINMW</name>
<keyword id="KW-0694">RNA-binding</keyword>
<keyword id="KW-0804">Transcription</keyword>
<keyword id="KW-0889">Transcription antitermination</keyword>
<keyword id="KW-0805">Transcription regulation</keyword>
<protein>
    <recommendedName>
        <fullName evidence="1">Transcription antitermination protein NusB</fullName>
    </recommendedName>
    <alternativeName>
        <fullName evidence="1">Antitermination factor NusB</fullName>
    </alternativeName>
</protein>
<comment type="function">
    <text evidence="1">Involved in transcription antitermination. Required for transcription of ribosomal RNA (rRNA) genes. Binds specifically to the boxA antiterminator sequence of the ribosomal RNA (rrn) operons.</text>
</comment>
<comment type="similarity">
    <text evidence="1">Belongs to the NusB family.</text>
</comment>
<reference key="1">
    <citation type="submission" date="2007-06" db="EMBL/GenBank/DDBJ databases">
        <title>Complete sequence of Sinorhizobium medicae WSM419 chromosome.</title>
        <authorList>
            <consortium name="US DOE Joint Genome Institute"/>
            <person name="Copeland A."/>
            <person name="Lucas S."/>
            <person name="Lapidus A."/>
            <person name="Barry K."/>
            <person name="Glavina del Rio T."/>
            <person name="Dalin E."/>
            <person name="Tice H."/>
            <person name="Pitluck S."/>
            <person name="Chain P."/>
            <person name="Malfatti S."/>
            <person name="Shin M."/>
            <person name="Vergez L."/>
            <person name="Schmutz J."/>
            <person name="Larimer F."/>
            <person name="Land M."/>
            <person name="Hauser L."/>
            <person name="Kyrpides N."/>
            <person name="Mikhailova N."/>
            <person name="Reeve W.G."/>
            <person name="Richardson P."/>
        </authorList>
    </citation>
    <scope>NUCLEOTIDE SEQUENCE [LARGE SCALE GENOMIC DNA]</scope>
    <source>
        <strain>WSM419</strain>
    </source>
</reference>
<gene>
    <name evidence="1" type="primary">nusB</name>
    <name type="ordered locus">Smed_0822</name>
</gene>
<dbReference type="EMBL" id="CP000738">
    <property type="protein sequence ID" value="ABR59678.1"/>
    <property type="molecule type" value="Genomic_DNA"/>
</dbReference>
<dbReference type="RefSeq" id="WP_011975018.1">
    <property type="nucleotide sequence ID" value="NC_009636.1"/>
</dbReference>
<dbReference type="RefSeq" id="YP_001326513.1">
    <property type="nucleotide sequence ID" value="NC_009636.1"/>
</dbReference>
<dbReference type="SMR" id="A6U7P8"/>
<dbReference type="STRING" id="366394.Smed_0822"/>
<dbReference type="GeneID" id="61612408"/>
<dbReference type="KEGG" id="smd:Smed_0822"/>
<dbReference type="PATRIC" id="fig|366394.8.peg.3936"/>
<dbReference type="eggNOG" id="COG0781">
    <property type="taxonomic scope" value="Bacteria"/>
</dbReference>
<dbReference type="HOGENOM" id="CLU_087843_4_0_5"/>
<dbReference type="OrthoDB" id="9797817at2"/>
<dbReference type="Proteomes" id="UP000001108">
    <property type="component" value="Chromosome"/>
</dbReference>
<dbReference type="GO" id="GO:0005829">
    <property type="term" value="C:cytosol"/>
    <property type="evidence" value="ECO:0007669"/>
    <property type="project" value="TreeGrafter"/>
</dbReference>
<dbReference type="GO" id="GO:0003723">
    <property type="term" value="F:RNA binding"/>
    <property type="evidence" value="ECO:0007669"/>
    <property type="project" value="UniProtKB-UniRule"/>
</dbReference>
<dbReference type="GO" id="GO:0006353">
    <property type="term" value="P:DNA-templated transcription termination"/>
    <property type="evidence" value="ECO:0007669"/>
    <property type="project" value="UniProtKB-UniRule"/>
</dbReference>
<dbReference type="GO" id="GO:0031564">
    <property type="term" value="P:transcription antitermination"/>
    <property type="evidence" value="ECO:0007669"/>
    <property type="project" value="UniProtKB-KW"/>
</dbReference>
<dbReference type="Gene3D" id="1.10.940.10">
    <property type="entry name" value="NusB-like"/>
    <property type="match status" value="1"/>
</dbReference>
<dbReference type="HAMAP" id="MF_00073">
    <property type="entry name" value="NusB"/>
    <property type="match status" value="1"/>
</dbReference>
<dbReference type="InterPro" id="IPR035926">
    <property type="entry name" value="NusB-like_sf"/>
</dbReference>
<dbReference type="InterPro" id="IPR011605">
    <property type="entry name" value="NusB_fam"/>
</dbReference>
<dbReference type="InterPro" id="IPR006027">
    <property type="entry name" value="NusB_RsmB_TIM44"/>
</dbReference>
<dbReference type="NCBIfam" id="TIGR01951">
    <property type="entry name" value="nusB"/>
    <property type="match status" value="1"/>
</dbReference>
<dbReference type="PANTHER" id="PTHR11078:SF3">
    <property type="entry name" value="ANTITERMINATION NUSB DOMAIN-CONTAINING PROTEIN"/>
    <property type="match status" value="1"/>
</dbReference>
<dbReference type="PANTHER" id="PTHR11078">
    <property type="entry name" value="N UTILIZATION SUBSTANCE PROTEIN B-RELATED"/>
    <property type="match status" value="1"/>
</dbReference>
<dbReference type="Pfam" id="PF01029">
    <property type="entry name" value="NusB"/>
    <property type="match status" value="1"/>
</dbReference>
<dbReference type="SUPFAM" id="SSF48013">
    <property type="entry name" value="NusB-like"/>
    <property type="match status" value="1"/>
</dbReference>
<organism>
    <name type="scientific">Sinorhizobium medicae (strain WSM419)</name>
    <name type="common">Ensifer medicae</name>
    <dbReference type="NCBI Taxonomy" id="366394"/>
    <lineage>
        <taxon>Bacteria</taxon>
        <taxon>Pseudomonadati</taxon>
        <taxon>Pseudomonadota</taxon>
        <taxon>Alphaproteobacteria</taxon>
        <taxon>Hyphomicrobiales</taxon>
        <taxon>Rhizobiaceae</taxon>
        <taxon>Sinorhizobium/Ensifer group</taxon>
        <taxon>Sinorhizobium</taxon>
    </lineage>
</organism>
<accession>A6U7P8</accession>
<sequence length="160" mass="17905">MTNTPSDQPLKQVNQRGAARLAAVQALYQMDVGGTGVLEIVAEYEEHRLGKELDGDTYLRADASWFRSIVAGVVRDQRKLDPLIGSALQDDWALSRLDSTVRAILRAGTFEILERKDVPVPVIVTEYVEIAKAFFQDEEPKLVNAVLDRIAKQVRGEQRK</sequence>